<sequence>MVKRTYQPNKRKHSKVHGFRKRMSTKNGRKVLARRRRKGRKVLSA</sequence>
<comment type="similarity">
    <text evidence="1">Belongs to the bacterial ribosomal protein bL34 family.</text>
</comment>
<accession>Q6GD90</accession>
<gene>
    <name evidence="1" type="primary">rpmH</name>
    <name type="ordered locus">SAR2800</name>
</gene>
<feature type="chain" id="PRO_0000187463" description="Large ribosomal subunit protein bL34">
    <location>
        <begin position="1"/>
        <end position="45"/>
    </location>
</feature>
<feature type="region of interest" description="Disordered" evidence="2">
    <location>
        <begin position="1"/>
        <end position="45"/>
    </location>
</feature>
<dbReference type="EMBL" id="BX571856">
    <property type="protein sequence ID" value="CAG41772.1"/>
    <property type="molecule type" value="Genomic_DNA"/>
</dbReference>
<dbReference type="RefSeq" id="WP_000240855.1">
    <property type="nucleotide sequence ID" value="NC_002952.2"/>
</dbReference>
<dbReference type="SMR" id="Q6GD90"/>
<dbReference type="GeneID" id="98347025"/>
<dbReference type="KEGG" id="sar:SAR2800"/>
<dbReference type="HOGENOM" id="CLU_129938_2_0_9"/>
<dbReference type="Proteomes" id="UP000000596">
    <property type="component" value="Chromosome"/>
</dbReference>
<dbReference type="GO" id="GO:1990904">
    <property type="term" value="C:ribonucleoprotein complex"/>
    <property type="evidence" value="ECO:0007669"/>
    <property type="project" value="UniProtKB-KW"/>
</dbReference>
<dbReference type="GO" id="GO:0005840">
    <property type="term" value="C:ribosome"/>
    <property type="evidence" value="ECO:0007669"/>
    <property type="project" value="UniProtKB-KW"/>
</dbReference>
<dbReference type="GO" id="GO:0003735">
    <property type="term" value="F:structural constituent of ribosome"/>
    <property type="evidence" value="ECO:0007669"/>
    <property type="project" value="InterPro"/>
</dbReference>
<dbReference type="GO" id="GO:0006412">
    <property type="term" value="P:translation"/>
    <property type="evidence" value="ECO:0007669"/>
    <property type="project" value="UniProtKB-UniRule"/>
</dbReference>
<dbReference type="FunFam" id="1.10.287.3980:FF:000001">
    <property type="entry name" value="Mitochondrial ribosomal protein L34"/>
    <property type="match status" value="1"/>
</dbReference>
<dbReference type="Gene3D" id="1.10.287.3980">
    <property type="match status" value="1"/>
</dbReference>
<dbReference type="HAMAP" id="MF_00391">
    <property type="entry name" value="Ribosomal_bL34"/>
    <property type="match status" value="1"/>
</dbReference>
<dbReference type="InterPro" id="IPR000271">
    <property type="entry name" value="Ribosomal_bL34"/>
</dbReference>
<dbReference type="InterPro" id="IPR020939">
    <property type="entry name" value="Ribosomal_bL34_CS"/>
</dbReference>
<dbReference type="NCBIfam" id="TIGR01030">
    <property type="entry name" value="rpmH_bact"/>
    <property type="match status" value="1"/>
</dbReference>
<dbReference type="PANTHER" id="PTHR14503:SF4">
    <property type="entry name" value="LARGE RIBOSOMAL SUBUNIT PROTEIN BL34M"/>
    <property type="match status" value="1"/>
</dbReference>
<dbReference type="PANTHER" id="PTHR14503">
    <property type="entry name" value="MITOCHONDRIAL RIBOSOMAL PROTEIN 34 FAMILY MEMBER"/>
    <property type="match status" value="1"/>
</dbReference>
<dbReference type="Pfam" id="PF00468">
    <property type="entry name" value="Ribosomal_L34"/>
    <property type="match status" value="1"/>
</dbReference>
<dbReference type="PROSITE" id="PS00784">
    <property type="entry name" value="RIBOSOMAL_L34"/>
    <property type="match status" value="1"/>
</dbReference>
<name>RL34_STAAR</name>
<reference key="1">
    <citation type="journal article" date="2004" name="Proc. Natl. Acad. Sci. U.S.A.">
        <title>Complete genomes of two clinical Staphylococcus aureus strains: evidence for the rapid evolution of virulence and drug resistance.</title>
        <authorList>
            <person name="Holden M.T.G."/>
            <person name="Feil E.J."/>
            <person name="Lindsay J.A."/>
            <person name="Peacock S.J."/>
            <person name="Day N.P.J."/>
            <person name="Enright M.C."/>
            <person name="Foster T.J."/>
            <person name="Moore C.E."/>
            <person name="Hurst L."/>
            <person name="Atkin R."/>
            <person name="Barron A."/>
            <person name="Bason N."/>
            <person name="Bentley S.D."/>
            <person name="Chillingworth C."/>
            <person name="Chillingworth T."/>
            <person name="Churcher C."/>
            <person name="Clark L."/>
            <person name="Corton C."/>
            <person name="Cronin A."/>
            <person name="Doggett J."/>
            <person name="Dowd L."/>
            <person name="Feltwell T."/>
            <person name="Hance Z."/>
            <person name="Harris B."/>
            <person name="Hauser H."/>
            <person name="Holroyd S."/>
            <person name="Jagels K."/>
            <person name="James K.D."/>
            <person name="Lennard N."/>
            <person name="Line A."/>
            <person name="Mayes R."/>
            <person name="Moule S."/>
            <person name="Mungall K."/>
            <person name="Ormond D."/>
            <person name="Quail M.A."/>
            <person name="Rabbinowitsch E."/>
            <person name="Rutherford K.M."/>
            <person name="Sanders M."/>
            <person name="Sharp S."/>
            <person name="Simmonds M."/>
            <person name="Stevens K."/>
            <person name="Whitehead S."/>
            <person name="Barrell B.G."/>
            <person name="Spratt B.G."/>
            <person name="Parkhill J."/>
        </authorList>
    </citation>
    <scope>NUCLEOTIDE SEQUENCE [LARGE SCALE GENOMIC DNA]</scope>
    <source>
        <strain>MRSA252</strain>
    </source>
</reference>
<protein>
    <recommendedName>
        <fullName evidence="1">Large ribosomal subunit protein bL34</fullName>
    </recommendedName>
    <alternativeName>
        <fullName evidence="3">50S ribosomal protein L34</fullName>
    </alternativeName>
</protein>
<organism>
    <name type="scientific">Staphylococcus aureus (strain MRSA252)</name>
    <dbReference type="NCBI Taxonomy" id="282458"/>
    <lineage>
        <taxon>Bacteria</taxon>
        <taxon>Bacillati</taxon>
        <taxon>Bacillota</taxon>
        <taxon>Bacilli</taxon>
        <taxon>Bacillales</taxon>
        <taxon>Staphylococcaceae</taxon>
        <taxon>Staphylococcus</taxon>
    </lineage>
</organism>
<keyword id="KW-0687">Ribonucleoprotein</keyword>
<keyword id="KW-0689">Ribosomal protein</keyword>
<proteinExistence type="inferred from homology"/>
<evidence type="ECO:0000255" key="1">
    <source>
        <dbReference type="HAMAP-Rule" id="MF_00391"/>
    </source>
</evidence>
<evidence type="ECO:0000256" key="2">
    <source>
        <dbReference type="SAM" id="MobiDB-lite"/>
    </source>
</evidence>
<evidence type="ECO:0000305" key="3"/>